<name>LPLA_ECOL6</name>
<gene>
    <name evidence="2" type="primary">lplA</name>
    <name type="ordered locus">c5471</name>
</gene>
<feature type="initiator methionine" description="Removed" evidence="1">
    <location>
        <position position="1"/>
    </location>
</feature>
<feature type="chain" id="PRO_0000209566" description="Lipoate-protein ligase A">
    <location>
        <begin position="2"/>
        <end position="338"/>
    </location>
</feature>
<feature type="domain" description="BPL/LPL catalytic" evidence="3">
    <location>
        <begin position="29"/>
        <end position="216"/>
    </location>
</feature>
<feature type="binding site" evidence="2">
    <location>
        <position position="71"/>
    </location>
    <ligand>
        <name>ATP</name>
        <dbReference type="ChEBI" id="CHEBI:30616"/>
    </ligand>
</feature>
<feature type="binding site" evidence="2">
    <location>
        <begin position="76"/>
        <end position="79"/>
    </location>
    <ligand>
        <name>ATP</name>
        <dbReference type="ChEBI" id="CHEBI:30616"/>
    </ligand>
</feature>
<feature type="binding site" evidence="2">
    <location>
        <position position="134"/>
    </location>
    <ligand>
        <name>(R)-lipoate</name>
        <dbReference type="ChEBI" id="CHEBI:83088"/>
    </ligand>
</feature>
<feature type="binding site" evidence="2">
    <location>
        <position position="134"/>
    </location>
    <ligand>
        <name>ATP</name>
        <dbReference type="ChEBI" id="CHEBI:30616"/>
    </ligand>
</feature>
<comment type="function">
    <text evidence="2">Catalyzes both the ATP-dependent activation of exogenously supplied lipoate to lipoyl-AMP and the transfer of the activated lipoyl onto the lipoyl domains of lipoate-dependent enzymes.</text>
</comment>
<comment type="catalytic activity">
    <reaction evidence="2">
        <text>L-lysyl-[lipoyl-carrier protein] + (R)-lipoate + ATP = N(6)-[(R)-lipoyl]-L-lysyl-[lipoyl-carrier protein] + AMP + diphosphate + H(+)</text>
        <dbReference type="Rhea" id="RHEA:49288"/>
        <dbReference type="Rhea" id="RHEA-COMP:10500"/>
        <dbReference type="Rhea" id="RHEA-COMP:10502"/>
        <dbReference type="ChEBI" id="CHEBI:15378"/>
        <dbReference type="ChEBI" id="CHEBI:29969"/>
        <dbReference type="ChEBI" id="CHEBI:30616"/>
        <dbReference type="ChEBI" id="CHEBI:33019"/>
        <dbReference type="ChEBI" id="CHEBI:83088"/>
        <dbReference type="ChEBI" id="CHEBI:83099"/>
        <dbReference type="ChEBI" id="CHEBI:456215"/>
        <dbReference type="EC" id="6.3.1.20"/>
    </reaction>
</comment>
<comment type="pathway">
    <text evidence="2">Protein modification; protein lipoylation via exogenous pathway; protein N(6)-(lipoyl)lysine from lipoate: step 1/2.</text>
</comment>
<comment type="pathway">
    <text evidence="2">Protein modification; protein lipoylation via exogenous pathway; protein N(6)-(lipoyl)lysine from lipoate: step 2/2.</text>
</comment>
<comment type="subunit">
    <text evidence="2">Monomer.</text>
</comment>
<comment type="subcellular location">
    <subcellularLocation>
        <location evidence="2">Cytoplasm</location>
    </subcellularLocation>
</comment>
<comment type="miscellaneous">
    <text evidence="2">In the transfer reaction, the free carboxyl group of lipoic acid is attached via an amide linkage to the epsilon-amino group of a specific lysine residue of lipoyl domains of lipoate-dependent enzymes.</text>
</comment>
<comment type="similarity">
    <text evidence="2">Belongs to the LplA family.</text>
</comment>
<sequence>MSTLRLLISDSYDPWFNLAVEECIFRQMPATQRVLFLWRNADTVVIGRAQNPWKECNTRRMEEDNVRLARRSSGGGAVFHDLGNTCFTFMAGKPEYDKTISTSIVLNALNALGVSAEASGRNDLVVKTAEGDRKVSGSAYRETKDRGFHHGTLLLNADLSRLANYLNPDKKKLAAKGITSVRSRVTNLTELLPGITHEQVCEAIREAFFAHYGERVEAEIISPDKTPDLPNFAETFARQSSWEWNFGQAPAFSHLLDERFSWGGVELHFDVEKGHITRAQVFTDSLNPAPLEALAGRLQGCLYRADMLQQECEALLVDFPEQEKELPELSAWIAGAVR</sequence>
<keyword id="KW-0067">ATP-binding</keyword>
<keyword id="KW-0963">Cytoplasm</keyword>
<keyword id="KW-0436">Ligase</keyword>
<keyword id="KW-0547">Nucleotide-binding</keyword>
<keyword id="KW-1185">Reference proteome</keyword>
<dbReference type="EC" id="6.3.1.20" evidence="2"/>
<dbReference type="EMBL" id="AE014075">
    <property type="protein sequence ID" value="AAN83891.1"/>
    <property type="molecule type" value="Genomic_DNA"/>
</dbReference>
<dbReference type="RefSeq" id="WP_000105836.1">
    <property type="nucleotide sequence ID" value="NZ_CP051263.1"/>
</dbReference>
<dbReference type="SMR" id="Q8FA49"/>
<dbReference type="STRING" id="199310.c5471"/>
<dbReference type="KEGG" id="ecc:c5471"/>
<dbReference type="eggNOG" id="COG0095">
    <property type="taxonomic scope" value="Bacteria"/>
</dbReference>
<dbReference type="HOGENOM" id="CLU_022986_0_1_6"/>
<dbReference type="BioCyc" id="ECOL199310:C5471-MONOMER"/>
<dbReference type="UniPathway" id="UPA00537">
    <property type="reaction ID" value="UER00594"/>
</dbReference>
<dbReference type="UniPathway" id="UPA00537">
    <property type="reaction ID" value="UER00595"/>
</dbReference>
<dbReference type="Proteomes" id="UP000001410">
    <property type="component" value="Chromosome"/>
</dbReference>
<dbReference type="GO" id="GO:0005829">
    <property type="term" value="C:cytosol"/>
    <property type="evidence" value="ECO:0007669"/>
    <property type="project" value="TreeGrafter"/>
</dbReference>
<dbReference type="GO" id="GO:0005524">
    <property type="term" value="F:ATP binding"/>
    <property type="evidence" value="ECO:0007669"/>
    <property type="project" value="UniProtKB-KW"/>
</dbReference>
<dbReference type="GO" id="GO:0016979">
    <property type="term" value="F:lipoate-protein ligase activity"/>
    <property type="evidence" value="ECO:0007669"/>
    <property type="project" value="UniProtKB-UniRule"/>
</dbReference>
<dbReference type="GO" id="GO:0017118">
    <property type="term" value="F:lipoyltransferase activity"/>
    <property type="evidence" value="ECO:0007669"/>
    <property type="project" value="TreeGrafter"/>
</dbReference>
<dbReference type="GO" id="GO:0036211">
    <property type="term" value="P:protein modification process"/>
    <property type="evidence" value="ECO:0007669"/>
    <property type="project" value="InterPro"/>
</dbReference>
<dbReference type="CDD" id="cd16443">
    <property type="entry name" value="LplA"/>
    <property type="match status" value="1"/>
</dbReference>
<dbReference type="FunFam" id="3.30.390.50:FF:000002">
    <property type="entry name" value="Lipoate-protein ligase A"/>
    <property type="match status" value="1"/>
</dbReference>
<dbReference type="FunFam" id="3.30.930.10:FF:000024">
    <property type="entry name" value="Lipoate-protein ligase A"/>
    <property type="match status" value="1"/>
</dbReference>
<dbReference type="Gene3D" id="3.30.930.10">
    <property type="entry name" value="Bira Bifunctional Protein, Domain 2"/>
    <property type="match status" value="1"/>
</dbReference>
<dbReference type="Gene3D" id="3.30.390.50">
    <property type="entry name" value="CO dehydrogenase flavoprotein, C-terminal domain"/>
    <property type="match status" value="1"/>
</dbReference>
<dbReference type="HAMAP" id="MF_01602">
    <property type="entry name" value="LplA"/>
    <property type="match status" value="1"/>
</dbReference>
<dbReference type="InterPro" id="IPR045864">
    <property type="entry name" value="aa-tRNA-synth_II/BPL/LPL"/>
</dbReference>
<dbReference type="InterPro" id="IPR004143">
    <property type="entry name" value="BPL_LPL_catalytic"/>
</dbReference>
<dbReference type="InterPro" id="IPR023741">
    <property type="entry name" value="Lipoate_ligase_A"/>
</dbReference>
<dbReference type="InterPro" id="IPR019491">
    <property type="entry name" value="Lipoate_protein_ligase_C"/>
</dbReference>
<dbReference type="InterPro" id="IPR004562">
    <property type="entry name" value="LipoylTrfase_LipoateP_Ligase"/>
</dbReference>
<dbReference type="NCBIfam" id="TIGR00545">
    <property type="entry name" value="lipoyltrans"/>
    <property type="match status" value="1"/>
</dbReference>
<dbReference type="PANTHER" id="PTHR12561">
    <property type="entry name" value="LIPOATE-PROTEIN LIGASE"/>
    <property type="match status" value="1"/>
</dbReference>
<dbReference type="PANTHER" id="PTHR12561:SF3">
    <property type="entry name" value="LIPOYLTRANSFERASE 1, MITOCHONDRIAL"/>
    <property type="match status" value="1"/>
</dbReference>
<dbReference type="Pfam" id="PF10437">
    <property type="entry name" value="Lip_prot_lig_C"/>
    <property type="match status" value="1"/>
</dbReference>
<dbReference type="Pfam" id="PF21948">
    <property type="entry name" value="LplA-B_cat"/>
    <property type="match status" value="1"/>
</dbReference>
<dbReference type="SUPFAM" id="SSF55681">
    <property type="entry name" value="Class II aaRS and biotin synthetases"/>
    <property type="match status" value="1"/>
</dbReference>
<dbReference type="SUPFAM" id="SSF82649">
    <property type="entry name" value="SufE/NifU"/>
    <property type="match status" value="1"/>
</dbReference>
<dbReference type="PROSITE" id="PS51733">
    <property type="entry name" value="BPL_LPL_CATALYTIC"/>
    <property type="match status" value="1"/>
</dbReference>
<evidence type="ECO:0000250" key="1"/>
<evidence type="ECO:0000255" key="2">
    <source>
        <dbReference type="HAMAP-Rule" id="MF_01602"/>
    </source>
</evidence>
<evidence type="ECO:0000255" key="3">
    <source>
        <dbReference type="PROSITE-ProRule" id="PRU01067"/>
    </source>
</evidence>
<protein>
    <recommendedName>
        <fullName evidence="2">Lipoate-protein ligase A</fullName>
        <ecNumber evidence="2">6.3.1.20</ecNumber>
    </recommendedName>
    <alternativeName>
        <fullName evidence="2">Lipoate--protein ligase</fullName>
    </alternativeName>
</protein>
<reference key="1">
    <citation type="journal article" date="2002" name="Proc. Natl. Acad. Sci. U.S.A.">
        <title>Extensive mosaic structure revealed by the complete genome sequence of uropathogenic Escherichia coli.</title>
        <authorList>
            <person name="Welch R.A."/>
            <person name="Burland V."/>
            <person name="Plunkett G. III"/>
            <person name="Redford P."/>
            <person name="Roesch P."/>
            <person name="Rasko D."/>
            <person name="Buckles E.L."/>
            <person name="Liou S.-R."/>
            <person name="Boutin A."/>
            <person name="Hackett J."/>
            <person name="Stroud D."/>
            <person name="Mayhew G.F."/>
            <person name="Rose D.J."/>
            <person name="Zhou S."/>
            <person name="Schwartz D.C."/>
            <person name="Perna N.T."/>
            <person name="Mobley H.L.T."/>
            <person name="Donnenberg M.S."/>
            <person name="Blattner F.R."/>
        </authorList>
    </citation>
    <scope>NUCLEOTIDE SEQUENCE [LARGE SCALE GENOMIC DNA]</scope>
    <source>
        <strain>CFT073 / ATCC 700928 / UPEC</strain>
    </source>
</reference>
<accession>Q8FA49</accession>
<proteinExistence type="inferred from homology"/>
<organism>
    <name type="scientific">Escherichia coli O6:H1 (strain CFT073 / ATCC 700928 / UPEC)</name>
    <dbReference type="NCBI Taxonomy" id="199310"/>
    <lineage>
        <taxon>Bacteria</taxon>
        <taxon>Pseudomonadati</taxon>
        <taxon>Pseudomonadota</taxon>
        <taxon>Gammaproteobacteria</taxon>
        <taxon>Enterobacterales</taxon>
        <taxon>Enterobacteriaceae</taxon>
        <taxon>Escherichia</taxon>
    </lineage>
</organism>